<keyword id="KW-0325">Glycoprotein</keyword>
<keyword id="KW-0378">Hydrolase</keyword>
<keyword id="KW-0645">Protease</keyword>
<keyword id="KW-1185">Reference proteome</keyword>
<keyword id="KW-0964">Secreted</keyword>
<keyword id="KW-0720">Serine protease</keyword>
<keyword id="KW-0732">Signal</keyword>
<keyword id="KW-0843">Virulence</keyword>
<keyword id="KW-0865">Zymogen</keyword>
<comment type="function">
    <text evidence="1">Secreted subtilisin-like serine protease with keratinolytic activity that contributes to pathogenicity.</text>
</comment>
<comment type="subcellular location">
    <subcellularLocation>
        <location evidence="1">Secreted</location>
    </subcellularLocation>
</comment>
<comment type="induction">
    <text evidence="4">Expression is highly up-regulated during infection.</text>
</comment>
<comment type="similarity">
    <text evidence="5">Belongs to the peptidase S8 family.</text>
</comment>
<proteinExistence type="evidence at transcript level"/>
<evidence type="ECO:0000250" key="1"/>
<evidence type="ECO:0000255" key="2"/>
<evidence type="ECO:0000255" key="3">
    <source>
        <dbReference type="PROSITE-ProRule" id="PRU01240"/>
    </source>
</evidence>
<evidence type="ECO:0000269" key="4">
    <source>
    </source>
</evidence>
<evidence type="ECO:0000305" key="5"/>
<reference key="1">
    <citation type="journal article" date="2011" name="Genome Biol.">
        <title>Comparative and functional genomics provide insights into the pathogenicity of dermatophytic fungi.</title>
        <authorList>
            <person name="Burmester A."/>
            <person name="Shelest E."/>
            <person name="Gloeckner G."/>
            <person name="Heddergott C."/>
            <person name="Schindler S."/>
            <person name="Staib P."/>
            <person name="Heidel A."/>
            <person name="Felder M."/>
            <person name="Petzold A."/>
            <person name="Szafranski K."/>
            <person name="Feuermann M."/>
            <person name="Pedruzzi I."/>
            <person name="Priebe S."/>
            <person name="Groth M."/>
            <person name="Winkler R."/>
            <person name="Li W."/>
            <person name="Kniemeyer O."/>
            <person name="Schroeckh V."/>
            <person name="Hertweck C."/>
            <person name="Hube B."/>
            <person name="White T.C."/>
            <person name="Platzer M."/>
            <person name="Guthke R."/>
            <person name="Heitman J."/>
            <person name="Woestemeyer J."/>
            <person name="Zipfel P.F."/>
            <person name="Monod M."/>
            <person name="Brakhage A.A."/>
        </authorList>
    </citation>
    <scope>NUCLEOTIDE SEQUENCE [LARGE SCALE GENOMIC DNA]</scope>
    <source>
        <strain>ATCC MYA-4681 / CBS 112371</strain>
    </source>
</reference>
<reference key="2">
    <citation type="journal article" date="2010" name="Microbiology">
        <title>Differential gene expression in the pathogenic dermatophyte Arthroderma benhamiae in vitro versus during infection.</title>
        <authorList>
            <person name="Staib P."/>
            <person name="Zaugg C."/>
            <person name="Mignon B."/>
            <person name="Weber J."/>
            <person name="Grumbt M."/>
            <person name="Pradervand S."/>
            <person name="Harshman K."/>
            <person name="Monod M."/>
        </authorList>
    </citation>
    <scope>INDUCTION</scope>
</reference>
<name>SUB6_ARTBC</name>
<dbReference type="EC" id="3.4.21.-"/>
<dbReference type="EMBL" id="ABSU01000002">
    <property type="protein sequence ID" value="EFE36368.1"/>
    <property type="molecule type" value="Genomic_DNA"/>
</dbReference>
<dbReference type="RefSeq" id="XP_003017013.1">
    <property type="nucleotide sequence ID" value="XM_003016967.1"/>
</dbReference>
<dbReference type="SMR" id="D4ALV9"/>
<dbReference type="GlyCosmos" id="D4ALV9">
    <property type="glycosylation" value="3 sites, No reported glycans"/>
</dbReference>
<dbReference type="GeneID" id="9526734"/>
<dbReference type="KEGG" id="abe:ARB_05307"/>
<dbReference type="eggNOG" id="KOG1153">
    <property type="taxonomic scope" value="Eukaryota"/>
</dbReference>
<dbReference type="HOGENOM" id="CLU_011263_1_3_1"/>
<dbReference type="OMA" id="DNPPSWG"/>
<dbReference type="OrthoDB" id="206201at2759"/>
<dbReference type="PHI-base" id="PHI:6569"/>
<dbReference type="Proteomes" id="UP000008866">
    <property type="component" value="Unassembled WGS sequence"/>
</dbReference>
<dbReference type="GO" id="GO:0005576">
    <property type="term" value="C:extracellular region"/>
    <property type="evidence" value="ECO:0007669"/>
    <property type="project" value="UniProtKB-SubCell"/>
</dbReference>
<dbReference type="GO" id="GO:0004252">
    <property type="term" value="F:serine-type endopeptidase activity"/>
    <property type="evidence" value="ECO:0007669"/>
    <property type="project" value="InterPro"/>
</dbReference>
<dbReference type="GO" id="GO:0006508">
    <property type="term" value="P:proteolysis"/>
    <property type="evidence" value="ECO:0007669"/>
    <property type="project" value="UniProtKB-KW"/>
</dbReference>
<dbReference type="CDD" id="cd04077">
    <property type="entry name" value="Peptidases_S8_PCSK9_ProteinaseK_like"/>
    <property type="match status" value="1"/>
</dbReference>
<dbReference type="FunFam" id="3.40.50.200:FF:000014">
    <property type="entry name" value="Proteinase K"/>
    <property type="match status" value="1"/>
</dbReference>
<dbReference type="Gene3D" id="3.30.70.80">
    <property type="entry name" value="Peptidase S8 propeptide/proteinase inhibitor I9"/>
    <property type="match status" value="1"/>
</dbReference>
<dbReference type="Gene3D" id="3.40.50.200">
    <property type="entry name" value="Peptidase S8/S53 domain"/>
    <property type="match status" value="1"/>
</dbReference>
<dbReference type="InterPro" id="IPR034193">
    <property type="entry name" value="PCSK9_ProteinaseK-like"/>
</dbReference>
<dbReference type="InterPro" id="IPR000209">
    <property type="entry name" value="Peptidase_S8/S53_dom"/>
</dbReference>
<dbReference type="InterPro" id="IPR036852">
    <property type="entry name" value="Peptidase_S8/S53_dom_sf"/>
</dbReference>
<dbReference type="InterPro" id="IPR023827">
    <property type="entry name" value="Peptidase_S8_Asp-AS"/>
</dbReference>
<dbReference type="InterPro" id="IPR022398">
    <property type="entry name" value="Peptidase_S8_His-AS"/>
</dbReference>
<dbReference type="InterPro" id="IPR023828">
    <property type="entry name" value="Peptidase_S8_Ser-AS"/>
</dbReference>
<dbReference type="InterPro" id="IPR050131">
    <property type="entry name" value="Peptidase_S8_subtilisin-like"/>
</dbReference>
<dbReference type="InterPro" id="IPR015500">
    <property type="entry name" value="Peptidase_S8_subtilisin-rel"/>
</dbReference>
<dbReference type="InterPro" id="IPR010259">
    <property type="entry name" value="S8pro/Inhibitor_I9"/>
</dbReference>
<dbReference type="InterPro" id="IPR037045">
    <property type="entry name" value="S8pro/Inhibitor_I9_sf"/>
</dbReference>
<dbReference type="PANTHER" id="PTHR43806:SF11">
    <property type="entry name" value="CEREVISIN-RELATED"/>
    <property type="match status" value="1"/>
</dbReference>
<dbReference type="PANTHER" id="PTHR43806">
    <property type="entry name" value="PEPTIDASE S8"/>
    <property type="match status" value="1"/>
</dbReference>
<dbReference type="Pfam" id="PF05922">
    <property type="entry name" value="Inhibitor_I9"/>
    <property type="match status" value="1"/>
</dbReference>
<dbReference type="Pfam" id="PF00082">
    <property type="entry name" value="Peptidase_S8"/>
    <property type="match status" value="1"/>
</dbReference>
<dbReference type="PRINTS" id="PR00723">
    <property type="entry name" value="SUBTILISIN"/>
</dbReference>
<dbReference type="SUPFAM" id="SSF54897">
    <property type="entry name" value="Protease propeptides/inhibitors"/>
    <property type="match status" value="1"/>
</dbReference>
<dbReference type="SUPFAM" id="SSF52743">
    <property type="entry name" value="Subtilisin-like"/>
    <property type="match status" value="1"/>
</dbReference>
<dbReference type="PROSITE" id="PS51892">
    <property type="entry name" value="SUBTILASE"/>
    <property type="match status" value="1"/>
</dbReference>
<dbReference type="PROSITE" id="PS00136">
    <property type="entry name" value="SUBTILASE_ASP"/>
    <property type="match status" value="1"/>
</dbReference>
<dbReference type="PROSITE" id="PS00137">
    <property type="entry name" value="SUBTILASE_HIS"/>
    <property type="match status" value="1"/>
</dbReference>
<dbReference type="PROSITE" id="PS00138">
    <property type="entry name" value="SUBTILASE_SER"/>
    <property type="match status" value="1"/>
</dbReference>
<sequence>MGFITKAIPIVLAALSTVNGARILEAGPHAETIPNKYIVVMKKDVSEEAFSAHTTWLSQTLNSRLMRRAGSSKPMAGMQDKYSLGNVFRAYSGEFDEAMIKDISGHDDVDFIEPDFVVRTTTNGTNLTHQDNVPSWGLARVGSKQAGGTTYYYDPSAGKGVRAYIIDTGIDTDHKDFGGRAKWGKNFADDMDQDCNGHGTHVAGTVGGTQYGLAKSVSLIAVKVLDCEGSGSNSGVIKGMEWAMRDASGGGNGTAKAAGKTVMNMSLGGPRSEATNQAAKAISDAGIFLAVAAGNENMDAQHSSPASEPSVCTVAASTKDDGKASFSNYGSAVDVYAPGKDITSLKPGGSTDTLSGTSMASPHVCGLGAYLIGLGKQGGPGLCDTIKEMANDAIQSPGEDTTSKLIYNGSGK</sequence>
<feature type="signal peptide" evidence="2">
    <location>
        <begin position="1"/>
        <end position="20"/>
    </location>
</feature>
<feature type="propeptide" id="PRO_0000397798" evidence="1">
    <location>
        <begin position="21"/>
        <end position="127"/>
    </location>
</feature>
<feature type="chain" id="PRO_0000397799" description="Subtilisin-like protease 6">
    <location>
        <begin position="128"/>
        <end position="412"/>
    </location>
</feature>
<feature type="domain" description="Inhibitor I9" evidence="2">
    <location>
        <begin position="36"/>
        <end position="120"/>
    </location>
</feature>
<feature type="domain" description="Peptidase S8" evidence="3">
    <location>
        <begin position="135"/>
        <end position="412"/>
    </location>
</feature>
<feature type="active site" description="Charge relay system" evidence="3">
    <location>
        <position position="167"/>
    </location>
</feature>
<feature type="active site" description="Charge relay system" evidence="3">
    <location>
        <position position="198"/>
    </location>
</feature>
<feature type="active site" description="Charge relay system" evidence="3">
    <location>
        <position position="358"/>
    </location>
</feature>
<feature type="glycosylation site" description="N-linked (GlcNAc...) asparagine" evidence="2">
    <location>
        <position position="252"/>
    </location>
</feature>
<feature type="glycosylation site" description="N-linked (GlcNAc...) asparagine" evidence="2">
    <location>
        <position position="264"/>
    </location>
</feature>
<feature type="glycosylation site" description="N-linked (GlcNAc...) asparagine" evidence="2">
    <location>
        <position position="408"/>
    </location>
</feature>
<accession>D4ALV9</accession>
<gene>
    <name type="primary">SUB6</name>
    <name type="ORF">ARB_05307</name>
</gene>
<protein>
    <recommendedName>
        <fullName>Subtilisin-like protease 6</fullName>
        <ecNumber>3.4.21.-</ecNumber>
    </recommendedName>
</protein>
<organism>
    <name type="scientific">Arthroderma benhamiae (strain ATCC MYA-4681 / CBS 112371)</name>
    <name type="common">Trichophyton mentagrophytes</name>
    <dbReference type="NCBI Taxonomy" id="663331"/>
    <lineage>
        <taxon>Eukaryota</taxon>
        <taxon>Fungi</taxon>
        <taxon>Dikarya</taxon>
        <taxon>Ascomycota</taxon>
        <taxon>Pezizomycotina</taxon>
        <taxon>Eurotiomycetes</taxon>
        <taxon>Eurotiomycetidae</taxon>
        <taxon>Onygenales</taxon>
        <taxon>Arthrodermataceae</taxon>
        <taxon>Trichophyton</taxon>
    </lineage>
</organism>